<keyword id="KW-0238">DNA-binding</keyword>
<keyword id="KW-0479">Metal-binding</keyword>
<keyword id="KW-0539">Nucleus</keyword>
<keyword id="KW-1185">Reference proteome</keyword>
<keyword id="KW-0677">Repeat</keyword>
<keyword id="KW-0678">Repressor</keyword>
<keyword id="KW-0804">Transcription</keyword>
<keyword id="KW-0805">Transcription regulation</keyword>
<keyword id="KW-0862">Zinc</keyword>
<keyword id="KW-0863">Zinc-finger</keyword>
<protein>
    <recommendedName>
        <fullName>Transcription factor steA</fullName>
    </recommendedName>
</protein>
<dbReference type="EMBL" id="AF080600">
    <property type="protein sequence ID" value="AAC31206.1"/>
    <property type="molecule type" value="mRNA"/>
</dbReference>
<dbReference type="EMBL" id="AACD01000038">
    <property type="protein sequence ID" value="EAA64401.1"/>
    <property type="molecule type" value="Genomic_DNA"/>
</dbReference>
<dbReference type="EMBL" id="BN001307">
    <property type="protein sequence ID" value="CBF86542.1"/>
    <property type="molecule type" value="Genomic_DNA"/>
</dbReference>
<dbReference type="RefSeq" id="XP_659894.1">
    <property type="nucleotide sequence ID" value="XM_654802.2"/>
</dbReference>
<dbReference type="SMR" id="O74252"/>
<dbReference type="BioGRID" id="1955935">
    <property type="interactions" value="1"/>
</dbReference>
<dbReference type="FunCoup" id="O74252">
    <property type="interactions" value="1849"/>
</dbReference>
<dbReference type="STRING" id="227321.O74252"/>
<dbReference type="EnsemblFungi" id="CBF86542">
    <property type="protein sequence ID" value="CBF86542"/>
    <property type="gene ID" value="ANIA_02290"/>
</dbReference>
<dbReference type="GeneID" id="2875161"/>
<dbReference type="KEGG" id="ani:ANIA_02290"/>
<dbReference type="VEuPathDB" id="FungiDB:AN2290"/>
<dbReference type="eggNOG" id="KOG1721">
    <property type="taxonomic scope" value="Eukaryota"/>
</dbReference>
<dbReference type="HOGENOM" id="CLU_025505_0_0_1"/>
<dbReference type="InParanoid" id="O74252"/>
<dbReference type="OMA" id="EMSRHGT"/>
<dbReference type="OrthoDB" id="1095242at2759"/>
<dbReference type="Proteomes" id="UP000000560">
    <property type="component" value="Chromosome VII"/>
</dbReference>
<dbReference type="GO" id="GO:0005634">
    <property type="term" value="C:nucleus"/>
    <property type="evidence" value="ECO:0000318"/>
    <property type="project" value="GO_Central"/>
</dbReference>
<dbReference type="GO" id="GO:1990526">
    <property type="term" value="C:Ste12p-Dig1p-Dig2p complex"/>
    <property type="evidence" value="ECO:0000318"/>
    <property type="project" value="GO_Central"/>
</dbReference>
<dbReference type="GO" id="GO:1990527">
    <property type="term" value="C:Tec1p-Ste12p-Dig1p complex"/>
    <property type="evidence" value="ECO:0000318"/>
    <property type="project" value="GO_Central"/>
</dbReference>
<dbReference type="GO" id="GO:0003700">
    <property type="term" value="F:DNA-binding transcription factor activity"/>
    <property type="evidence" value="ECO:0000247"/>
    <property type="project" value="AspGD"/>
</dbReference>
<dbReference type="GO" id="GO:0043565">
    <property type="term" value="F:sequence-specific DNA binding"/>
    <property type="evidence" value="ECO:0000247"/>
    <property type="project" value="AspGD"/>
</dbReference>
<dbReference type="GO" id="GO:0008270">
    <property type="term" value="F:zinc ion binding"/>
    <property type="evidence" value="ECO:0007669"/>
    <property type="project" value="UniProtKB-KW"/>
</dbReference>
<dbReference type="GO" id="GO:0045892">
    <property type="term" value="P:negative regulation of DNA-templated transcription"/>
    <property type="evidence" value="ECO:0000315"/>
    <property type="project" value="UniProtKB"/>
</dbReference>
<dbReference type="GO" id="GO:0000122">
    <property type="term" value="P:negative regulation of transcription by RNA polymerase II"/>
    <property type="evidence" value="ECO:0000315"/>
    <property type="project" value="UniProtKB"/>
</dbReference>
<dbReference type="GO" id="GO:1900376">
    <property type="term" value="P:regulation of secondary metabolite biosynthetic process"/>
    <property type="evidence" value="ECO:0000315"/>
    <property type="project" value="AspGD"/>
</dbReference>
<dbReference type="GO" id="GO:0019953">
    <property type="term" value="P:sexual reproduction"/>
    <property type="evidence" value="ECO:0000315"/>
    <property type="project" value="UniProtKB"/>
</dbReference>
<dbReference type="GO" id="GO:0000909">
    <property type="term" value="P:sporocarp development involved in sexual reproduction"/>
    <property type="evidence" value="ECO:0000315"/>
    <property type="project" value="AspGD"/>
</dbReference>
<dbReference type="FunFam" id="3.30.160.60:FF:000243">
    <property type="entry name" value="Probable transcription factor steA"/>
    <property type="match status" value="1"/>
</dbReference>
<dbReference type="FunFam" id="3.30.160.60:FF:000390">
    <property type="entry name" value="Transcription factor stea"/>
    <property type="match status" value="1"/>
</dbReference>
<dbReference type="Gene3D" id="3.30.160.60">
    <property type="entry name" value="Classic Zinc Finger"/>
    <property type="match status" value="2"/>
</dbReference>
<dbReference type="InterPro" id="IPR003120">
    <property type="entry name" value="Ste12"/>
</dbReference>
<dbReference type="InterPro" id="IPR052127">
    <property type="entry name" value="STE12_transcription_factor"/>
</dbReference>
<dbReference type="InterPro" id="IPR036236">
    <property type="entry name" value="Znf_C2H2_sf"/>
</dbReference>
<dbReference type="InterPro" id="IPR013087">
    <property type="entry name" value="Znf_C2H2_type"/>
</dbReference>
<dbReference type="PANTHER" id="PTHR47427">
    <property type="entry name" value="PROTEIN STE12"/>
    <property type="match status" value="1"/>
</dbReference>
<dbReference type="PANTHER" id="PTHR47427:SF1">
    <property type="entry name" value="PROTEIN STE12"/>
    <property type="match status" value="1"/>
</dbReference>
<dbReference type="Pfam" id="PF02200">
    <property type="entry name" value="STE"/>
    <property type="match status" value="1"/>
</dbReference>
<dbReference type="Pfam" id="PF00096">
    <property type="entry name" value="zf-C2H2"/>
    <property type="match status" value="2"/>
</dbReference>
<dbReference type="SMART" id="SM00424">
    <property type="entry name" value="STE"/>
    <property type="match status" value="1"/>
</dbReference>
<dbReference type="SMART" id="SM00355">
    <property type="entry name" value="ZnF_C2H2"/>
    <property type="match status" value="2"/>
</dbReference>
<dbReference type="SUPFAM" id="SSF57667">
    <property type="entry name" value="beta-beta-alpha zinc fingers"/>
    <property type="match status" value="1"/>
</dbReference>
<dbReference type="PROSITE" id="PS00028">
    <property type="entry name" value="ZINC_FINGER_C2H2_1"/>
    <property type="match status" value="2"/>
</dbReference>
<dbReference type="PROSITE" id="PS50157">
    <property type="entry name" value="ZINC_FINGER_C2H2_2"/>
    <property type="match status" value="2"/>
</dbReference>
<feature type="chain" id="PRO_0000072268" description="Transcription factor steA">
    <location>
        <begin position="1"/>
        <end position="692"/>
    </location>
</feature>
<feature type="DNA-binding region" evidence="1">
    <location>
        <begin position="56"/>
        <end position="165"/>
    </location>
</feature>
<feature type="zinc finger region" description="C2H2-type 1" evidence="2">
    <location>
        <begin position="564"/>
        <end position="588"/>
    </location>
</feature>
<feature type="zinc finger region" description="C2H2-type 2" evidence="2">
    <location>
        <begin position="594"/>
        <end position="616"/>
    </location>
</feature>
<feature type="region of interest" description="Disordered" evidence="3">
    <location>
        <begin position="406"/>
        <end position="507"/>
    </location>
</feature>
<feature type="region of interest" description="Disordered" evidence="3">
    <location>
        <begin position="519"/>
        <end position="540"/>
    </location>
</feature>
<feature type="region of interest" description="Disordered" evidence="3">
    <location>
        <begin position="618"/>
        <end position="665"/>
    </location>
</feature>
<feature type="compositionally biased region" description="Polar residues" evidence="3">
    <location>
        <begin position="470"/>
        <end position="482"/>
    </location>
</feature>
<feature type="compositionally biased region" description="Acidic residues" evidence="3">
    <location>
        <begin position="629"/>
        <end position="647"/>
    </location>
</feature>
<proteinExistence type="evidence at transcript level"/>
<name>STE12_EMENI</name>
<comment type="function">
    <text evidence="4">Transcription factor involved in sexual reproduction. Required for cleistothecial development and ascosporogenesis. Not required for asexual reproduction (conidiation). May act to repress medA expression.</text>
</comment>
<comment type="subcellular location">
    <subcellularLocation>
        <location evidence="1">Nucleus</location>
    </subcellularLocation>
</comment>
<comment type="developmental stage">
    <text>Expression is low in vegetative hyphae and increases during conidiophore development.</text>
</comment>
<comment type="similarity">
    <text evidence="5">Belongs to the STE12 transcription factor family.</text>
</comment>
<gene>
    <name type="primary">steA</name>
    <name type="synonym">ste12</name>
    <name type="ORF">AN2290</name>
</gene>
<reference key="1">
    <citation type="journal article" date="2000" name="Mol. Microbiol.">
        <title>Aspergillus SteA (Sterile12-like) is a homeodomain-C2/H2-Zn+2 finger transcription factor required for sexual reproduction.</title>
        <authorList>
            <person name="Vallim M.A."/>
            <person name="Miller K.Y."/>
            <person name="Miller B.L."/>
        </authorList>
    </citation>
    <scope>NUCLEOTIDE SEQUENCE [MRNA]</scope>
    <scope>FUNCTION</scope>
    <source>
        <strain>FGSC A4 / ATCC 38163 / CBS 112.46 / NRRL 194 / M139</strain>
    </source>
</reference>
<reference key="2">
    <citation type="journal article" date="2005" name="Nature">
        <title>Sequencing of Aspergillus nidulans and comparative analysis with A. fumigatus and A. oryzae.</title>
        <authorList>
            <person name="Galagan J.E."/>
            <person name="Calvo S.E."/>
            <person name="Cuomo C."/>
            <person name="Ma L.-J."/>
            <person name="Wortman J.R."/>
            <person name="Batzoglou S."/>
            <person name="Lee S.-I."/>
            <person name="Bastuerkmen M."/>
            <person name="Spevak C.C."/>
            <person name="Clutterbuck J."/>
            <person name="Kapitonov V."/>
            <person name="Jurka J."/>
            <person name="Scazzocchio C."/>
            <person name="Farman M.L."/>
            <person name="Butler J."/>
            <person name="Purcell S."/>
            <person name="Harris S."/>
            <person name="Braus G.H."/>
            <person name="Draht O."/>
            <person name="Busch S."/>
            <person name="D'Enfert C."/>
            <person name="Bouchier C."/>
            <person name="Goldman G.H."/>
            <person name="Bell-Pedersen D."/>
            <person name="Griffiths-Jones S."/>
            <person name="Doonan J.H."/>
            <person name="Yu J."/>
            <person name="Vienken K."/>
            <person name="Pain A."/>
            <person name="Freitag M."/>
            <person name="Selker E.U."/>
            <person name="Archer D.B."/>
            <person name="Penalva M.A."/>
            <person name="Oakley B.R."/>
            <person name="Momany M."/>
            <person name="Tanaka T."/>
            <person name="Kumagai T."/>
            <person name="Asai K."/>
            <person name="Machida M."/>
            <person name="Nierman W.C."/>
            <person name="Denning D.W."/>
            <person name="Caddick M.X."/>
            <person name="Hynes M."/>
            <person name="Paoletti M."/>
            <person name="Fischer R."/>
            <person name="Miller B.L."/>
            <person name="Dyer P.S."/>
            <person name="Sachs M.S."/>
            <person name="Osmani S.A."/>
            <person name="Birren B.W."/>
        </authorList>
    </citation>
    <scope>NUCLEOTIDE SEQUENCE [LARGE SCALE GENOMIC DNA]</scope>
    <source>
        <strain>FGSC A4 / ATCC 38163 / CBS 112.46 / NRRL 194 / M139</strain>
    </source>
</reference>
<reference key="3">
    <citation type="journal article" date="2009" name="Fungal Genet. Biol.">
        <title>The 2008 update of the Aspergillus nidulans genome annotation: a community effort.</title>
        <authorList>
            <person name="Wortman J.R."/>
            <person name="Gilsenan J.M."/>
            <person name="Joardar V."/>
            <person name="Deegan J."/>
            <person name="Clutterbuck J."/>
            <person name="Andersen M.R."/>
            <person name="Archer D."/>
            <person name="Bencina M."/>
            <person name="Braus G."/>
            <person name="Coutinho P."/>
            <person name="von Dohren H."/>
            <person name="Doonan J."/>
            <person name="Driessen A.J."/>
            <person name="Durek P."/>
            <person name="Espeso E."/>
            <person name="Fekete E."/>
            <person name="Flipphi M."/>
            <person name="Estrada C.G."/>
            <person name="Geysens S."/>
            <person name="Goldman G."/>
            <person name="de Groot P.W."/>
            <person name="Hansen K."/>
            <person name="Harris S.D."/>
            <person name="Heinekamp T."/>
            <person name="Helmstaedt K."/>
            <person name="Henrissat B."/>
            <person name="Hofmann G."/>
            <person name="Homan T."/>
            <person name="Horio T."/>
            <person name="Horiuchi H."/>
            <person name="James S."/>
            <person name="Jones M."/>
            <person name="Karaffa L."/>
            <person name="Karanyi Z."/>
            <person name="Kato M."/>
            <person name="Keller N."/>
            <person name="Kelly D.E."/>
            <person name="Kiel J.A."/>
            <person name="Kim J.M."/>
            <person name="van der Klei I.J."/>
            <person name="Klis F.M."/>
            <person name="Kovalchuk A."/>
            <person name="Krasevec N."/>
            <person name="Kubicek C.P."/>
            <person name="Liu B."/>
            <person name="Maccabe A."/>
            <person name="Meyer V."/>
            <person name="Mirabito P."/>
            <person name="Miskei M."/>
            <person name="Mos M."/>
            <person name="Mullins J."/>
            <person name="Nelson D.R."/>
            <person name="Nielsen J."/>
            <person name="Oakley B.R."/>
            <person name="Osmani S.A."/>
            <person name="Pakula T."/>
            <person name="Paszewski A."/>
            <person name="Paulsen I."/>
            <person name="Pilsyk S."/>
            <person name="Pocsi I."/>
            <person name="Punt P.J."/>
            <person name="Ram A.F."/>
            <person name="Ren Q."/>
            <person name="Robellet X."/>
            <person name="Robson G."/>
            <person name="Seiboth B."/>
            <person name="van Solingen P."/>
            <person name="Specht T."/>
            <person name="Sun J."/>
            <person name="Taheri-Talesh N."/>
            <person name="Takeshita N."/>
            <person name="Ussery D."/>
            <person name="vanKuyk P.A."/>
            <person name="Visser H."/>
            <person name="van de Vondervoort P.J."/>
            <person name="de Vries R.P."/>
            <person name="Walton J."/>
            <person name="Xiang X."/>
            <person name="Xiong Y."/>
            <person name="Zeng A.P."/>
            <person name="Brandt B.W."/>
            <person name="Cornell M.J."/>
            <person name="van den Hondel C.A."/>
            <person name="Visser J."/>
            <person name="Oliver S.G."/>
            <person name="Turner G."/>
        </authorList>
    </citation>
    <scope>GENOME REANNOTATION</scope>
    <source>
        <strain>FGSC A4 / ATCC 38163 / CBS 112.46 / NRRL 194 / M139</strain>
    </source>
</reference>
<organism>
    <name type="scientific">Emericella nidulans (strain FGSC A4 / ATCC 38163 / CBS 112.46 / NRRL 194 / M139)</name>
    <name type="common">Aspergillus nidulans</name>
    <dbReference type="NCBI Taxonomy" id="227321"/>
    <lineage>
        <taxon>Eukaryota</taxon>
        <taxon>Fungi</taxon>
        <taxon>Dikarya</taxon>
        <taxon>Ascomycota</taxon>
        <taxon>Pezizomycotina</taxon>
        <taxon>Eurotiomycetes</taxon>
        <taxon>Eurotiomycetidae</taxon>
        <taxon>Eurotiales</taxon>
        <taxon>Aspergillaceae</taxon>
        <taxon>Aspergillus</taxon>
        <taxon>Aspergillus subgen. Nidulantes</taxon>
    </lineage>
</organism>
<accession>O74252</accession>
<accession>C8VN37</accession>
<accession>Q5BAZ0</accession>
<sequence>MYSQHGAPMAPPQKPETFMLSNEAQQSLPHDAQVALQQVDNLKYFLLSAPVDWQPDQLIRRFLLPTGDYISCVLWSNLFHISGTDIVRCLAFRFQAFGRPVKNSKKFEEGIFSDLRNLKAGTDATLEEPKSPFLDFLYKNNCIRTQKKQKVFYWYSVPHDRLFLDALERDLKREKMGQEATTVAVSEPALSFEFDSSQSLYEQLTKAQQANSSSFAAHASTTYGQSASPVVRTVDAMPPPQMAPQMAPPSIPLLTDESANSQMYTSIPMPNPIPQNLIKREADYGAIQYDRNGMPIARIHQRHSSMPTFVEYSPAPSFVSSQYEDYSNRGLSFEPVTPPQHSSHIGPEPAYIANEDTGLYTAIPEMSTGSGFNPMMHLPPSNLASAHFPTPARTFHSNVYSVLEGSPTYKQRRRRSSIPPGAANPVTTGTHSPAPALSYAAHKPSDLRRSVSSSVAPGDTDDSRHESLHRSVNSTYTATLPQKNLMHEMSRNGTPLSSVGEHREQSSIPLTQAEDLPALPANGTVESGAPNGVGHKSDRYATGPVRRARSATMMELGPYPQKSHSCPIPSCGRLFKRLEHLKRHVRTHTQERPYPCPYCNKAFSRSDNLAQHRRIHEAQQDGQPLVHEDDLENDDNESVSHDEDESPSESVHPAVPGVHGMTSMPSSVALQSTMGSMMGSHMIAPQLLQQQI</sequence>
<evidence type="ECO:0000250" key="1"/>
<evidence type="ECO:0000255" key="2">
    <source>
        <dbReference type="PROSITE-ProRule" id="PRU00042"/>
    </source>
</evidence>
<evidence type="ECO:0000256" key="3">
    <source>
        <dbReference type="SAM" id="MobiDB-lite"/>
    </source>
</evidence>
<evidence type="ECO:0000269" key="4">
    <source>
    </source>
</evidence>
<evidence type="ECO:0000305" key="5"/>